<gene>
    <name evidence="1" type="primary">rnhB</name>
    <name type="ordered locus">PMT9312_1594</name>
</gene>
<proteinExistence type="inferred from homology"/>
<feature type="chain" id="PRO_0000235749" description="Ribonuclease HII">
    <location>
        <begin position="1"/>
        <end position="205"/>
    </location>
</feature>
<feature type="domain" description="RNase H type-2" evidence="2">
    <location>
        <begin position="16"/>
        <end position="205"/>
    </location>
</feature>
<feature type="binding site" evidence="1">
    <location>
        <position position="22"/>
    </location>
    <ligand>
        <name>a divalent metal cation</name>
        <dbReference type="ChEBI" id="CHEBI:60240"/>
    </ligand>
</feature>
<feature type="binding site" evidence="1">
    <location>
        <position position="23"/>
    </location>
    <ligand>
        <name>a divalent metal cation</name>
        <dbReference type="ChEBI" id="CHEBI:60240"/>
    </ligand>
</feature>
<feature type="binding site" evidence="1">
    <location>
        <position position="118"/>
    </location>
    <ligand>
        <name>a divalent metal cation</name>
        <dbReference type="ChEBI" id="CHEBI:60240"/>
    </ligand>
</feature>
<evidence type="ECO:0000255" key="1">
    <source>
        <dbReference type="HAMAP-Rule" id="MF_00052"/>
    </source>
</evidence>
<evidence type="ECO:0000255" key="2">
    <source>
        <dbReference type="PROSITE-ProRule" id="PRU01319"/>
    </source>
</evidence>
<accession>Q318P1</accession>
<organism>
    <name type="scientific">Prochlorococcus marinus (strain MIT 9312)</name>
    <dbReference type="NCBI Taxonomy" id="74546"/>
    <lineage>
        <taxon>Bacteria</taxon>
        <taxon>Bacillati</taxon>
        <taxon>Cyanobacteriota</taxon>
        <taxon>Cyanophyceae</taxon>
        <taxon>Synechococcales</taxon>
        <taxon>Prochlorococcaceae</taxon>
        <taxon>Prochlorococcus</taxon>
    </lineage>
</organism>
<reference key="1">
    <citation type="journal article" date="2006" name="Science">
        <title>Genomic islands and the ecology and evolution of Prochlorococcus.</title>
        <authorList>
            <person name="Coleman M.L."/>
            <person name="Sullivan M.B."/>
            <person name="Martiny A.C."/>
            <person name="Steglich C."/>
            <person name="Barry K."/>
            <person name="Delong E.F."/>
            <person name="Chisholm S.W."/>
        </authorList>
    </citation>
    <scope>NUCLEOTIDE SEQUENCE [LARGE SCALE GENOMIC DNA]</scope>
    <source>
        <strain>MIT 9312</strain>
    </source>
</reference>
<keyword id="KW-0963">Cytoplasm</keyword>
<keyword id="KW-0255">Endonuclease</keyword>
<keyword id="KW-0378">Hydrolase</keyword>
<keyword id="KW-0464">Manganese</keyword>
<keyword id="KW-0479">Metal-binding</keyword>
<keyword id="KW-0540">Nuclease</keyword>
<sequence length="205" mass="22979">MREKKEEDLQQVLNKVSEVGIDEVGRGAVFGPVFSAVVVLTEKNKFILKQFGVKDSKKLTPKKRKLLLPKILLLSSDYGIGQSSAREIDMLGIRVATELSMIRALKKLKEKPSEIIVDGPLLLRPWKGIQKNIVSGDSKITAIASASIVAKVARDNLMERLEKKYSGYLIFKNKGYGTREHFSNIKKNGITNLHRKSFLNQSDLI</sequence>
<protein>
    <recommendedName>
        <fullName evidence="1">Ribonuclease HII</fullName>
        <shortName evidence="1">RNase HII</shortName>
        <ecNumber evidence="1">3.1.26.4</ecNumber>
    </recommendedName>
</protein>
<dbReference type="EC" id="3.1.26.4" evidence="1"/>
<dbReference type="EMBL" id="CP000111">
    <property type="protein sequence ID" value="ABB50654.1"/>
    <property type="molecule type" value="Genomic_DNA"/>
</dbReference>
<dbReference type="RefSeq" id="WP_011377136.1">
    <property type="nucleotide sequence ID" value="NC_007577.1"/>
</dbReference>
<dbReference type="SMR" id="Q318P1"/>
<dbReference type="STRING" id="74546.PMT9312_1594"/>
<dbReference type="KEGG" id="pmi:PMT9312_1594"/>
<dbReference type="eggNOG" id="COG0164">
    <property type="taxonomic scope" value="Bacteria"/>
</dbReference>
<dbReference type="HOGENOM" id="CLU_036532_3_1_3"/>
<dbReference type="OrthoDB" id="9803420at2"/>
<dbReference type="Proteomes" id="UP000002715">
    <property type="component" value="Chromosome"/>
</dbReference>
<dbReference type="GO" id="GO:0005737">
    <property type="term" value="C:cytoplasm"/>
    <property type="evidence" value="ECO:0007669"/>
    <property type="project" value="UniProtKB-SubCell"/>
</dbReference>
<dbReference type="GO" id="GO:0032299">
    <property type="term" value="C:ribonuclease H2 complex"/>
    <property type="evidence" value="ECO:0007669"/>
    <property type="project" value="TreeGrafter"/>
</dbReference>
<dbReference type="GO" id="GO:0030145">
    <property type="term" value="F:manganese ion binding"/>
    <property type="evidence" value="ECO:0007669"/>
    <property type="project" value="UniProtKB-UniRule"/>
</dbReference>
<dbReference type="GO" id="GO:0003723">
    <property type="term" value="F:RNA binding"/>
    <property type="evidence" value="ECO:0007669"/>
    <property type="project" value="InterPro"/>
</dbReference>
<dbReference type="GO" id="GO:0004523">
    <property type="term" value="F:RNA-DNA hybrid ribonuclease activity"/>
    <property type="evidence" value="ECO:0007669"/>
    <property type="project" value="UniProtKB-UniRule"/>
</dbReference>
<dbReference type="GO" id="GO:0043137">
    <property type="term" value="P:DNA replication, removal of RNA primer"/>
    <property type="evidence" value="ECO:0007669"/>
    <property type="project" value="TreeGrafter"/>
</dbReference>
<dbReference type="GO" id="GO:0006298">
    <property type="term" value="P:mismatch repair"/>
    <property type="evidence" value="ECO:0007669"/>
    <property type="project" value="TreeGrafter"/>
</dbReference>
<dbReference type="CDD" id="cd07182">
    <property type="entry name" value="RNase_HII_bacteria_HII_like"/>
    <property type="match status" value="1"/>
</dbReference>
<dbReference type="Gene3D" id="3.30.420.10">
    <property type="entry name" value="Ribonuclease H-like superfamily/Ribonuclease H"/>
    <property type="match status" value="1"/>
</dbReference>
<dbReference type="HAMAP" id="MF_00052_B">
    <property type="entry name" value="RNase_HII_B"/>
    <property type="match status" value="1"/>
</dbReference>
<dbReference type="InterPro" id="IPR022898">
    <property type="entry name" value="RNase_HII"/>
</dbReference>
<dbReference type="InterPro" id="IPR001352">
    <property type="entry name" value="RNase_HII/HIII"/>
</dbReference>
<dbReference type="InterPro" id="IPR024567">
    <property type="entry name" value="RNase_HII/HIII_dom"/>
</dbReference>
<dbReference type="InterPro" id="IPR012337">
    <property type="entry name" value="RNaseH-like_sf"/>
</dbReference>
<dbReference type="InterPro" id="IPR036397">
    <property type="entry name" value="RNaseH_sf"/>
</dbReference>
<dbReference type="NCBIfam" id="NF000595">
    <property type="entry name" value="PRK00015.1-3"/>
    <property type="match status" value="1"/>
</dbReference>
<dbReference type="NCBIfam" id="NF010537">
    <property type="entry name" value="PRK13925.1"/>
    <property type="match status" value="1"/>
</dbReference>
<dbReference type="PANTHER" id="PTHR10954">
    <property type="entry name" value="RIBONUCLEASE H2 SUBUNIT A"/>
    <property type="match status" value="1"/>
</dbReference>
<dbReference type="PANTHER" id="PTHR10954:SF18">
    <property type="entry name" value="RIBONUCLEASE HII"/>
    <property type="match status" value="1"/>
</dbReference>
<dbReference type="Pfam" id="PF01351">
    <property type="entry name" value="RNase_HII"/>
    <property type="match status" value="1"/>
</dbReference>
<dbReference type="SUPFAM" id="SSF53098">
    <property type="entry name" value="Ribonuclease H-like"/>
    <property type="match status" value="1"/>
</dbReference>
<dbReference type="PROSITE" id="PS51975">
    <property type="entry name" value="RNASE_H_2"/>
    <property type="match status" value="1"/>
</dbReference>
<name>RNH2_PROM9</name>
<comment type="function">
    <text evidence="1">Endonuclease that specifically degrades the RNA of RNA-DNA hybrids.</text>
</comment>
<comment type="catalytic activity">
    <reaction evidence="1">
        <text>Endonucleolytic cleavage to 5'-phosphomonoester.</text>
        <dbReference type="EC" id="3.1.26.4"/>
    </reaction>
</comment>
<comment type="cofactor">
    <cofactor evidence="1">
        <name>Mn(2+)</name>
        <dbReference type="ChEBI" id="CHEBI:29035"/>
    </cofactor>
    <cofactor evidence="1">
        <name>Mg(2+)</name>
        <dbReference type="ChEBI" id="CHEBI:18420"/>
    </cofactor>
    <text evidence="1">Manganese or magnesium. Binds 1 divalent metal ion per monomer in the absence of substrate. May bind a second metal ion after substrate binding.</text>
</comment>
<comment type="subcellular location">
    <subcellularLocation>
        <location evidence="1">Cytoplasm</location>
    </subcellularLocation>
</comment>
<comment type="similarity">
    <text evidence="1">Belongs to the RNase HII family.</text>
</comment>